<organism>
    <name type="scientific">Parasynechococcus marenigrum (strain WH8102)</name>
    <dbReference type="NCBI Taxonomy" id="84588"/>
    <lineage>
        <taxon>Bacteria</taxon>
        <taxon>Bacillati</taxon>
        <taxon>Cyanobacteriota</taxon>
        <taxon>Cyanophyceae</taxon>
        <taxon>Synechococcales</taxon>
        <taxon>Prochlorococcaceae</taxon>
        <taxon>Parasynechococcus</taxon>
        <taxon>Parasynechococcus marenigrum</taxon>
    </lineage>
</organism>
<gene>
    <name evidence="2" type="primary">psaC</name>
    <name type="ordered locus">SYNW0144</name>
</gene>
<evidence type="ECO:0000250" key="1"/>
<evidence type="ECO:0000255" key="2">
    <source>
        <dbReference type="HAMAP-Rule" id="MF_01303"/>
    </source>
</evidence>
<evidence type="ECO:0000305" key="3"/>
<keyword id="KW-0004">4Fe-4S</keyword>
<keyword id="KW-0249">Electron transport</keyword>
<keyword id="KW-0408">Iron</keyword>
<keyword id="KW-0411">Iron-sulfur</keyword>
<keyword id="KW-0472">Membrane</keyword>
<keyword id="KW-0479">Metal-binding</keyword>
<keyword id="KW-0560">Oxidoreductase</keyword>
<keyword id="KW-0602">Photosynthesis</keyword>
<keyword id="KW-0603">Photosystem I</keyword>
<keyword id="KW-0677">Repeat</keyword>
<keyword id="KW-0793">Thylakoid</keyword>
<keyword id="KW-0813">Transport</keyword>
<sequence>MSHAVKIYDTCIGCTQCVRACPLDVLEMVPWDGCKAGQIASSPRTEDCVGCKRCETACPTDFLSIRVYLGDETTRSMGLAY</sequence>
<feature type="initiator methionine" description="Removed" evidence="1">
    <location>
        <position position="1"/>
    </location>
</feature>
<feature type="chain" id="PRO_0000062023" description="Photosystem I iron-sulfur center">
    <location>
        <begin position="2"/>
        <end position="81"/>
    </location>
</feature>
<feature type="domain" description="4Fe-4S ferredoxin-type 1" evidence="2">
    <location>
        <begin position="2"/>
        <end position="31"/>
    </location>
</feature>
<feature type="domain" description="4Fe-4S ferredoxin-type 2" evidence="2">
    <location>
        <begin position="37"/>
        <end position="68"/>
    </location>
</feature>
<feature type="binding site" evidence="2">
    <location>
        <position position="11"/>
    </location>
    <ligand>
        <name>[4Fe-4S] cluster</name>
        <dbReference type="ChEBI" id="CHEBI:49883"/>
        <label>1</label>
    </ligand>
</feature>
<feature type="binding site" evidence="2">
    <location>
        <position position="14"/>
    </location>
    <ligand>
        <name>[4Fe-4S] cluster</name>
        <dbReference type="ChEBI" id="CHEBI:49883"/>
        <label>1</label>
    </ligand>
</feature>
<feature type="binding site" evidence="2">
    <location>
        <position position="17"/>
    </location>
    <ligand>
        <name>[4Fe-4S] cluster</name>
        <dbReference type="ChEBI" id="CHEBI:49883"/>
        <label>1</label>
    </ligand>
</feature>
<feature type="binding site" evidence="2">
    <location>
        <position position="21"/>
    </location>
    <ligand>
        <name>[4Fe-4S] cluster</name>
        <dbReference type="ChEBI" id="CHEBI:49883"/>
        <label>2</label>
    </ligand>
</feature>
<feature type="binding site" evidence="2">
    <location>
        <position position="48"/>
    </location>
    <ligand>
        <name>[4Fe-4S] cluster</name>
        <dbReference type="ChEBI" id="CHEBI:49883"/>
        <label>2</label>
    </ligand>
</feature>
<feature type="binding site" evidence="2">
    <location>
        <position position="51"/>
    </location>
    <ligand>
        <name>[4Fe-4S] cluster</name>
        <dbReference type="ChEBI" id="CHEBI:49883"/>
        <label>2</label>
    </ligand>
</feature>
<feature type="binding site" evidence="2">
    <location>
        <position position="54"/>
    </location>
    <ligand>
        <name>[4Fe-4S] cluster</name>
        <dbReference type="ChEBI" id="CHEBI:49883"/>
        <label>2</label>
    </ligand>
</feature>
<feature type="binding site" evidence="2">
    <location>
        <position position="58"/>
    </location>
    <ligand>
        <name>[4Fe-4S] cluster</name>
        <dbReference type="ChEBI" id="CHEBI:49883"/>
        <label>1</label>
    </ligand>
</feature>
<proteinExistence type="inferred from homology"/>
<dbReference type="EC" id="1.97.1.12" evidence="2"/>
<dbReference type="EMBL" id="BX569689">
    <property type="protein sequence ID" value="CAE06659.1"/>
    <property type="status" value="ALT_INIT"/>
    <property type="molecule type" value="Genomic_DNA"/>
</dbReference>
<dbReference type="RefSeq" id="WP_006850103.1">
    <property type="nucleotide sequence ID" value="NC_005070.1"/>
</dbReference>
<dbReference type="SMR" id="P0A418"/>
<dbReference type="STRING" id="84588.SYNW0144"/>
<dbReference type="KEGG" id="syw:SYNW0144"/>
<dbReference type="eggNOG" id="COG1143">
    <property type="taxonomic scope" value="Bacteria"/>
</dbReference>
<dbReference type="HOGENOM" id="CLU_139698_8_0_3"/>
<dbReference type="Proteomes" id="UP000001422">
    <property type="component" value="Chromosome"/>
</dbReference>
<dbReference type="GO" id="GO:0009522">
    <property type="term" value="C:photosystem I"/>
    <property type="evidence" value="ECO:0007669"/>
    <property type="project" value="UniProtKB-KW"/>
</dbReference>
<dbReference type="GO" id="GO:0031676">
    <property type="term" value="C:plasma membrane-derived thylakoid membrane"/>
    <property type="evidence" value="ECO:0007669"/>
    <property type="project" value="UniProtKB-SubCell"/>
</dbReference>
<dbReference type="GO" id="GO:0051539">
    <property type="term" value="F:4 iron, 4 sulfur cluster binding"/>
    <property type="evidence" value="ECO:0007669"/>
    <property type="project" value="UniProtKB-KW"/>
</dbReference>
<dbReference type="GO" id="GO:0009055">
    <property type="term" value="F:electron transfer activity"/>
    <property type="evidence" value="ECO:0007669"/>
    <property type="project" value="UniProtKB-UniRule"/>
</dbReference>
<dbReference type="GO" id="GO:0046872">
    <property type="term" value="F:metal ion binding"/>
    <property type="evidence" value="ECO:0007669"/>
    <property type="project" value="UniProtKB-KW"/>
</dbReference>
<dbReference type="GO" id="GO:0016491">
    <property type="term" value="F:oxidoreductase activity"/>
    <property type="evidence" value="ECO:0007669"/>
    <property type="project" value="UniProtKB-KW"/>
</dbReference>
<dbReference type="GO" id="GO:0009773">
    <property type="term" value="P:photosynthetic electron transport in photosystem I"/>
    <property type="evidence" value="ECO:0007669"/>
    <property type="project" value="InterPro"/>
</dbReference>
<dbReference type="FunFam" id="3.30.70.20:FF:000001">
    <property type="entry name" value="Photosystem I iron-sulfur center"/>
    <property type="match status" value="1"/>
</dbReference>
<dbReference type="Gene3D" id="3.30.70.20">
    <property type="match status" value="1"/>
</dbReference>
<dbReference type="HAMAP" id="MF_01303">
    <property type="entry name" value="PSI_PsaC"/>
    <property type="match status" value="1"/>
</dbReference>
<dbReference type="InterPro" id="IPR017896">
    <property type="entry name" value="4Fe4S_Fe-S-bd"/>
</dbReference>
<dbReference type="InterPro" id="IPR017900">
    <property type="entry name" value="4Fe4S_Fe_S_CS"/>
</dbReference>
<dbReference type="InterPro" id="IPR050157">
    <property type="entry name" value="PSI_iron-sulfur_center"/>
</dbReference>
<dbReference type="InterPro" id="IPR017491">
    <property type="entry name" value="PSI_PsaC"/>
</dbReference>
<dbReference type="NCBIfam" id="TIGR03048">
    <property type="entry name" value="PS_I_psaC"/>
    <property type="match status" value="1"/>
</dbReference>
<dbReference type="PANTHER" id="PTHR24960:SF79">
    <property type="entry name" value="PHOTOSYSTEM I IRON-SULFUR CENTER"/>
    <property type="match status" value="1"/>
</dbReference>
<dbReference type="PANTHER" id="PTHR24960">
    <property type="entry name" value="PHOTOSYSTEM I IRON-SULFUR CENTER-RELATED"/>
    <property type="match status" value="1"/>
</dbReference>
<dbReference type="Pfam" id="PF12838">
    <property type="entry name" value="Fer4_7"/>
    <property type="match status" value="1"/>
</dbReference>
<dbReference type="SUPFAM" id="SSF54862">
    <property type="entry name" value="4Fe-4S ferredoxins"/>
    <property type="match status" value="1"/>
</dbReference>
<dbReference type="PROSITE" id="PS00198">
    <property type="entry name" value="4FE4S_FER_1"/>
    <property type="match status" value="2"/>
</dbReference>
<dbReference type="PROSITE" id="PS51379">
    <property type="entry name" value="4FE4S_FER_2"/>
    <property type="match status" value="2"/>
</dbReference>
<protein>
    <recommendedName>
        <fullName evidence="2">Photosystem I iron-sulfur center</fullName>
        <ecNumber evidence="2">1.97.1.12</ecNumber>
    </recommendedName>
    <alternativeName>
        <fullName evidence="2">9 kDa polypeptide</fullName>
    </alternativeName>
    <alternativeName>
        <fullName evidence="2">PSI-C</fullName>
    </alternativeName>
    <alternativeName>
        <fullName evidence="2">Photosystem I subunit VII</fullName>
    </alternativeName>
    <alternativeName>
        <fullName evidence="2">PsaC</fullName>
    </alternativeName>
</protein>
<accession>P0A418</accession>
<accession>O69195</accession>
<name>PSAC_PARMW</name>
<comment type="function">
    <text evidence="2">Apoprotein for the two 4Fe-4S centers FA and FB of photosystem I (PSI); essential for photochemical activity. FB is the terminal electron acceptor of PSI, donating electrons to ferredoxin. The C-terminus interacts with PsaA/B/D and helps assemble the protein into the PSI complex. Required for binding of PsaD and PsaE to PSI. PSI is a plastocyanin/cytochrome c6-ferredoxin oxidoreductase, converting photonic excitation into a charge separation, which transfers an electron from the donor P700 chlorophyll pair to the spectroscopically characterized acceptors A0, A1, FX, FA and FB in turn.</text>
</comment>
<comment type="catalytic activity">
    <reaction evidence="2">
        <text>reduced [plastocyanin] + hnu + oxidized [2Fe-2S]-[ferredoxin] = oxidized [plastocyanin] + reduced [2Fe-2S]-[ferredoxin]</text>
        <dbReference type="Rhea" id="RHEA:30407"/>
        <dbReference type="Rhea" id="RHEA-COMP:10000"/>
        <dbReference type="Rhea" id="RHEA-COMP:10001"/>
        <dbReference type="Rhea" id="RHEA-COMP:10039"/>
        <dbReference type="Rhea" id="RHEA-COMP:10040"/>
        <dbReference type="ChEBI" id="CHEBI:29036"/>
        <dbReference type="ChEBI" id="CHEBI:30212"/>
        <dbReference type="ChEBI" id="CHEBI:33737"/>
        <dbReference type="ChEBI" id="CHEBI:33738"/>
        <dbReference type="ChEBI" id="CHEBI:49552"/>
        <dbReference type="EC" id="1.97.1.12"/>
    </reaction>
</comment>
<comment type="cofactor">
    <cofactor evidence="2">
        <name>[4Fe-4S] cluster</name>
        <dbReference type="ChEBI" id="CHEBI:49883"/>
    </cofactor>
    <text evidence="2">Binds 2 [4Fe-4S] clusters. Cluster 2 is most probably the spectroscopically characterized electron acceptor FA and cluster 1 is most probably FB.</text>
</comment>
<comment type="subunit">
    <text evidence="2">The cyanobacterial PSI reaction center is composed of one copy each of PsaA,B,C,D,E,F,I,J,K,L,M and X, and forms trimeric complexes.</text>
</comment>
<comment type="subcellular location">
    <subcellularLocation>
        <location evidence="2">Cellular thylakoid membrane</location>
        <topology evidence="2">Peripheral membrane protein</topology>
        <orientation evidence="2">Cytoplasmic side</orientation>
    </subcellularLocation>
</comment>
<comment type="sequence caution" evidence="3">
    <conflict type="erroneous initiation">
        <sequence resource="EMBL-CDS" id="CAE06659"/>
    </conflict>
</comment>
<reference key="1">
    <citation type="journal article" date="2003" name="Nature">
        <title>The genome of a motile marine Synechococcus.</title>
        <authorList>
            <person name="Palenik B."/>
            <person name="Brahamsha B."/>
            <person name="Larimer F.W."/>
            <person name="Land M.L."/>
            <person name="Hauser L."/>
            <person name="Chain P."/>
            <person name="Lamerdin J.E."/>
            <person name="Regala W."/>
            <person name="Allen E.E."/>
            <person name="McCarren J."/>
            <person name="Paulsen I.T."/>
            <person name="Dufresne A."/>
            <person name="Partensky F."/>
            <person name="Webb E.A."/>
            <person name="Waterbury J."/>
        </authorList>
    </citation>
    <scope>NUCLEOTIDE SEQUENCE [LARGE SCALE GENOMIC DNA]</scope>
    <source>
        <strain>WH8102</strain>
    </source>
</reference>